<dbReference type="EMBL" id="AL123456">
    <property type="protein sequence ID" value="CCP43347.1"/>
    <property type="molecule type" value="Genomic_DNA"/>
</dbReference>
<dbReference type="PIR" id="C70910">
    <property type="entry name" value="C70910"/>
</dbReference>
<dbReference type="RefSeq" id="NP_215122.1">
    <property type="nucleotide sequence ID" value="NC_000962.3"/>
</dbReference>
<dbReference type="RefSeq" id="WP_003403184.1">
    <property type="nucleotide sequence ID" value="NZ_NVQJ01000033.1"/>
</dbReference>
<dbReference type="SMR" id="P9WJ39"/>
<dbReference type="STRING" id="83332.Rv0608"/>
<dbReference type="PaxDb" id="83332-Rv0608"/>
<dbReference type="DNASU" id="887895"/>
<dbReference type="GeneID" id="887895"/>
<dbReference type="KEGG" id="mtu:Rv0608"/>
<dbReference type="KEGG" id="mtv:RVBD_0608"/>
<dbReference type="TubercuList" id="Rv0608"/>
<dbReference type="eggNOG" id="COG4423">
    <property type="taxonomic scope" value="Bacteria"/>
</dbReference>
<dbReference type="InParanoid" id="P9WJ39"/>
<dbReference type="OrthoDB" id="560250at2"/>
<dbReference type="Proteomes" id="UP000001584">
    <property type="component" value="Chromosome"/>
</dbReference>
<dbReference type="GO" id="GO:0045927">
    <property type="term" value="P:positive regulation of growth"/>
    <property type="evidence" value="ECO:0000315"/>
    <property type="project" value="MTBBASE"/>
</dbReference>
<dbReference type="InterPro" id="IPR011660">
    <property type="entry name" value="VapB-like"/>
</dbReference>
<dbReference type="Pfam" id="PF07704">
    <property type="entry name" value="PSK_trans_fac"/>
    <property type="match status" value="1"/>
</dbReference>
<accession>P9WJ39</accession>
<accession>L0T763</accession>
<accession>O07770</accession>
<accession>Q7D9J7</accession>
<keyword id="KW-1185">Reference proteome</keyword>
<keyword id="KW-1277">Toxin-antitoxin system</keyword>
<sequence>MALNIKDPSVHQAVKQIAKITGESQARAVATAVNERLARLRSDDLAARLLAIGHKTASRMSPEAKRLDHDALLYDERGLPA</sequence>
<feature type="chain" id="PRO_0000408072" description="Antitoxin VapB28">
    <location>
        <begin position="1"/>
        <end position="81"/>
    </location>
</feature>
<organism>
    <name type="scientific">Mycobacterium tuberculosis (strain ATCC 25618 / H37Rv)</name>
    <dbReference type="NCBI Taxonomy" id="83332"/>
    <lineage>
        <taxon>Bacteria</taxon>
        <taxon>Bacillati</taxon>
        <taxon>Actinomycetota</taxon>
        <taxon>Actinomycetes</taxon>
        <taxon>Mycobacteriales</taxon>
        <taxon>Mycobacteriaceae</taxon>
        <taxon>Mycobacterium</taxon>
        <taxon>Mycobacterium tuberculosis complex</taxon>
    </lineage>
</organism>
<proteinExistence type="evidence at protein level"/>
<reference key="1">
    <citation type="journal article" date="1998" name="Nature">
        <title>Deciphering the biology of Mycobacterium tuberculosis from the complete genome sequence.</title>
        <authorList>
            <person name="Cole S.T."/>
            <person name="Brosch R."/>
            <person name="Parkhill J."/>
            <person name="Garnier T."/>
            <person name="Churcher C.M."/>
            <person name="Harris D.E."/>
            <person name="Gordon S.V."/>
            <person name="Eiglmeier K."/>
            <person name="Gas S."/>
            <person name="Barry C.E. III"/>
            <person name="Tekaia F."/>
            <person name="Badcock K."/>
            <person name="Basham D."/>
            <person name="Brown D."/>
            <person name="Chillingworth T."/>
            <person name="Connor R."/>
            <person name="Davies R.M."/>
            <person name="Devlin K."/>
            <person name="Feltwell T."/>
            <person name="Gentles S."/>
            <person name="Hamlin N."/>
            <person name="Holroyd S."/>
            <person name="Hornsby T."/>
            <person name="Jagels K."/>
            <person name="Krogh A."/>
            <person name="McLean J."/>
            <person name="Moule S."/>
            <person name="Murphy L.D."/>
            <person name="Oliver S."/>
            <person name="Osborne J."/>
            <person name="Quail M.A."/>
            <person name="Rajandream M.A."/>
            <person name="Rogers J."/>
            <person name="Rutter S."/>
            <person name="Seeger K."/>
            <person name="Skelton S."/>
            <person name="Squares S."/>
            <person name="Squares R."/>
            <person name="Sulston J.E."/>
            <person name="Taylor K."/>
            <person name="Whitehead S."/>
            <person name="Barrell B.G."/>
        </authorList>
    </citation>
    <scope>NUCLEOTIDE SEQUENCE [LARGE SCALE GENOMIC DNA]</scope>
    <source>
        <strain>ATCC 25618 / H37Rv</strain>
    </source>
</reference>
<reference key="2">
    <citation type="journal article" date="2009" name="PLoS Genet.">
        <title>Comprehensive functional analysis of Mycobacterium tuberculosis toxin-antitoxin systems: implications for pathogenesis, stress responses, and evolution.</title>
        <authorList>
            <person name="Ramage H.R."/>
            <person name="Connolly L.E."/>
            <person name="Cox J.S."/>
        </authorList>
    </citation>
    <scope>EXPRESSION IN M.SMEGMATIS</scope>
    <scope>FUNCTION AS AN ANTITOXIN</scope>
    <source>
        <strain>ATCC 35801 / TMC 107 / Erdman</strain>
    </source>
</reference>
<reference key="3">
    <citation type="journal article" date="2011" name="Mol. Cell. Proteomics">
        <title>Proteogenomic analysis of Mycobacterium tuberculosis by high resolution mass spectrometry.</title>
        <authorList>
            <person name="Kelkar D.S."/>
            <person name="Kumar D."/>
            <person name="Kumar P."/>
            <person name="Balakrishnan L."/>
            <person name="Muthusamy B."/>
            <person name="Yadav A.K."/>
            <person name="Shrivastava P."/>
            <person name="Marimuthu A."/>
            <person name="Anand S."/>
            <person name="Sundaram H."/>
            <person name="Kingsbury R."/>
            <person name="Harsha H.C."/>
            <person name="Nair B."/>
            <person name="Prasad T.S."/>
            <person name="Chauhan D.S."/>
            <person name="Katoch K."/>
            <person name="Katoch V.M."/>
            <person name="Kumar P."/>
            <person name="Chaerkady R."/>
            <person name="Ramachandran S."/>
            <person name="Dash D."/>
            <person name="Pandey A."/>
        </authorList>
    </citation>
    <scope>IDENTIFICATION BY MASS SPECTROMETRY [LARGE SCALE ANALYSIS]</scope>
    <source>
        <strain>ATCC 25618 / H37Rv</strain>
    </source>
</reference>
<gene>
    <name type="primary">vapB28</name>
    <name type="ordered locus">Rv0608</name>
</gene>
<protein>
    <recommendedName>
        <fullName>Antitoxin VapB28</fullName>
    </recommendedName>
</protein>
<evidence type="ECO:0000269" key="1">
    <source>
    </source>
</evidence>
<comment type="function">
    <text evidence="1">Antitoxin component of a type II toxin-antitoxin (TA) system. Upon expression in M.smegmatis neutralizes the effect of cognate toxin VapC28.</text>
</comment>
<name>VPB28_MYCTU</name>